<protein>
    <recommendedName>
        <fullName evidence="4">Mitochondrial citrate transporter E</fullName>
        <ecNumber evidence="6">7.-.-.-</ecNumber>
    </recommendedName>
</protein>
<evidence type="ECO:0000255" key="1"/>
<evidence type="ECO:0000255" key="2">
    <source>
        <dbReference type="PROSITE-ProRule" id="PRU00282"/>
    </source>
</evidence>
<evidence type="ECO:0000269" key="3">
    <source>
    </source>
</evidence>
<evidence type="ECO:0000303" key="4">
    <source>
    </source>
</evidence>
<evidence type="ECO:0000305" key="5"/>
<evidence type="ECO:0000305" key="6">
    <source>
    </source>
</evidence>
<keyword id="KW-0472">Membrane</keyword>
<keyword id="KW-0496">Mitochondrion</keyword>
<keyword id="KW-0999">Mitochondrion inner membrane</keyword>
<keyword id="KW-0677">Repeat</keyword>
<keyword id="KW-1278">Translocase</keyword>
<keyword id="KW-0812">Transmembrane</keyword>
<keyword id="KW-1133">Transmembrane helix</keyword>
<keyword id="KW-0813">Transport</keyword>
<sequence length="310" mass="33678">MSTTTGAFIAGGVAACGAVTVTHSFETVKIRLQLQGELQAKQDAAKKYRGVLHGVKVILQNEGPRGLFRGIGSAYIYQVLLNGCRLGFYEPLRQGLATTIYQDAQVQSLGINVLAGAASGIIGAAAGSPFFLVKTRLQSFSPFLPVGTQHNYKNSFDGLRKIHTSEGVSGLYRGVGAAMVRTGFGSSVQLPTYFFAKRRLMKHLGMEDGPGLHLASSTASGFVVCCVMHPPDTIMSRMYNQTGNLYKGVFDCLFKTIKTEGVLAIYKGYFAHLARILPHTILTLSLAEQTNKIMRRLEDRFLSDSLKENL</sequence>
<comment type="function">
    <text evidence="3">Mitochondrial transporter that does not mediate citrate export from mitochondria to cytoplasm (PubMed:36177470). Its exact function has still to be determined (PubMed:36177470).</text>
</comment>
<comment type="subcellular location">
    <subcellularLocation>
        <location evidence="6">Mitochondrion inner membrane</location>
        <topology evidence="1">Multi-pass membrane protein</topology>
    </subcellularLocation>
</comment>
<comment type="disruption phenotype">
    <text evidence="3">Leads to fluffy and albino colonies, and reduced conidia formation, when all 6 genes ctpA to ctpF are deleted.</text>
</comment>
<comment type="similarity">
    <text evidence="5">Belongs to the mitochondrial carrier (TC 2.A.29) family.</text>
</comment>
<proteinExistence type="inferred from homology"/>
<feature type="chain" id="PRO_0000457332" description="Mitochondrial citrate transporter E">
    <location>
        <begin position="1"/>
        <end position="310"/>
    </location>
</feature>
<feature type="transmembrane region" description="Helical; Name=1" evidence="1">
    <location>
        <begin position="8"/>
        <end position="28"/>
    </location>
</feature>
<feature type="transmembrane region" description="Helical; Name=2" evidence="1">
    <location>
        <begin position="72"/>
        <end position="92"/>
    </location>
</feature>
<feature type="transmembrane region" description="Helical; Name=3" evidence="1">
    <location>
        <begin position="114"/>
        <end position="133"/>
    </location>
</feature>
<feature type="transmembrane region" description="Helical; Name=4" evidence="1">
    <location>
        <begin position="178"/>
        <end position="198"/>
    </location>
</feature>
<feature type="transmembrane region" description="Helical; Name=5" evidence="1">
    <location>
        <begin position="211"/>
        <end position="228"/>
    </location>
</feature>
<feature type="transmembrane region" description="Helical; Name=6" evidence="1">
    <location>
        <begin position="265"/>
        <end position="286"/>
    </location>
</feature>
<feature type="repeat" description="Solcar 1" evidence="2">
    <location>
        <begin position="2"/>
        <end position="95"/>
    </location>
</feature>
<feature type="repeat" description="Solcar 2" evidence="2">
    <location>
        <begin position="107"/>
        <end position="199"/>
    </location>
</feature>
<feature type="repeat" description="Solcar 3" evidence="2">
    <location>
        <begin position="208"/>
        <end position="293"/>
    </location>
</feature>
<accession>G3XP90</accession>
<name>CTPE_ASPNA</name>
<gene>
    <name evidence="4" type="primary">ctpE</name>
    <name type="ORF">ASPNIDRAFT_41991</name>
</gene>
<dbReference type="EC" id="7.-.-.-" evidence="6"/>
<dbReference type="EMBL" id="ACJE01000002">
    <property type="protein sequence ID" value="EHA28052.1"/>
    <property type="molecule type" value="Genomic_DNA"/>
</dbReference>
<dbReference type="SMR" id="G3XP90"/>
<dbReference type="STRING" id="380704.G3XP90"/>
<dbReference type="VEuPathDB" id="FungiDB:ASPNIDRAFT2_1141800"/>
<dbReference type="HOGENOM" id="CLU_015166_14_3_1"/>
<dbReference type="OrthoDB" id="68585at5052"/>
<dbReference type="Proteomes" id="UP000009038">
    <property type="component" value="Unassembled WGS sequence"/>
</dbReference>
<dbReference type="GO" id="GO:0005743">
    <property type="term" value="C:mitochondrial inner membrane"/>
    <property type="evidence" value="ECO:0007669"/>
    <property type="project" value="UniProtKB-SubCell"/>
</dbReference>
<dbReference type="Gene3D" id="1.50.40.10">
    <property type="entry name" value="Mitochondrial carrier domain"/>
    <property type="match status" value="1"/>
</dbReference>
<dbReference type="InterPro" id="IPR051508">
    <property type="entry name" value="Mito_Carrier_Antiporter"/>
</dbReference>
<dbReference type="InterPro" id="IPR018108">
    <property type="entry name" value="Mitochondrial_sb/sol_carrier"/>
</dbReference>
<dbReference type="InterPro" id="IPR023395">
    <property type="entry name" value="Mt_carrier_dom_sf"/>
</dbReference>
<dbReference type="PANTHER" id="PTHR45928">
    <property type="entry name" value="RE38146P"/>
    <property type="match status" value="1"/>
</dbReference>
<dbReference type="PANTHER" id="PTHR45928:SF1">
    <property type="entry name" value="RE38146P"/>
    <property type="match status" value="1"/>
</dbReference>
<dbReference type="Pfam" id="PF00153">
    <property type="entry name" value="Mito_carr"/>
    <property type="match status" value="3"/>
</dbReference>
<dbReference type="SUPFAM" id="SSF103506">
    <property type="entry name" value="Mitochondrial carrier"/>
    <property type="match status" value="1"/>
</dbReference>
<dbReference type="PROSITE" id="PS50920">
    <property type="entry name" value="SOLCAR"/>
    <property type="match status" value="3"/>
</dbReference>
<organism>
    <name type="scientific">Aspergillus niger (strain ATCC 1015 / CBS 113.46 / FGSC A1144 / LSHB Ac4 / NCTC 3858a / NRRL 328 / USDA 3528.7)</name>
    <dbReference type="NCBI Taxonomy" id="380704"/>
    <lineage>
        <taxon>Eukaryota</taxon>
        <taxon>Fungi</taxon>
        <taxon>Dikarya</taxon>
        <taxon>Ascomycota</taxon>
        <taxon>Pezizomycotina</taxon>
        <taxon>Eurotiomycetes</taxon>
        <taxon>Eurotiomycetidae</taxon>
        <taxon>Eurotiales</taxon>
        <taxon>Aspergillaceae</taxon>
        <taxon>Aspergillus</taxon>
        <taxon>Aspergillus subgen. Circumdati</taxon>
    </lineage>
</organism>
<reference key="1">
    <citation type="journal article" date="2011" name="Genome Res.">
        <title>Comparative genomics of citric-acid-producing Aspergillus niger ATCC 1015 versus enzyme-producing CBS 513.88.</title>
        <authorList>
            <person name="Andersen M.R."/>
            <person name="Salazar M.P."/>
            <person name="Schaap P.J."/>
            <person name="van de Vondervoort P.J.I."/>
            <person name="Culley D."/>
            <person name="Thykaer J."/>
            <person name="Frisvad J.C."/>
            <person name="Nielsen K.F."/>
            <person name="Albang R."/>
            <person name="Albermann K."/>
            <person name="Berka R.M."/>
            <person name="Braus G.H."/>
            <person name="Braus-Stromeyer S.A."/>
            <person name="Corrochano L.M."/>
            <person name="Dai Z."/>
            <person name="van Dijck P.W.M."/>
            <person name="Hofmann G."/>
            <person name="Lasure L.L."/>
            <person name="Magnuson J.K."/>
            <person name="Menke H."/>
            <person name="Meijer M."/>
            <person name="Meijer S.L."/>
            <person name="Nielsen J.B."/>
            <person name="Nielsen M.L."/>
            <person name="van Ooyen A.J.J."/>
            <person name="Pel H.J."/>
            <person name="Poulsen L."/>
            <person name="Samson R.A."/>
            <person name="Stam H."/>
            <person name="Tsang A."/>
            <person name="van den Brink J.M."/>
            <person name="Atkins A."/>
            <person name="Aerts A."/>
            <person name="Shapiro H."/>
            <person name="Pangilinan J."/>
            <person name="Salamov A."/>
            <person name="Lou Y."/>
            <person name="Lindquist E."/>
            <person name="Lucas S."/>
            <person name="Grimwood J."/>
            <person name="Grigoriev I.V."/>
            <person name="Kubicek C.P."/>
            <person name="Martinez D."/>
            <person name="van Peij N.N.M.E."/>
            <person name="Roubos J.A."/>
            <person name="Nielsen J."/>
            <person name="Baker S.E."/>
        </authorList>
    </citation>
    <scope>NUCLEOTIDE SEQUENCE [LARGE SCALE GENOMIC DNA]</scope>
    <source>
        <strain>ATCC 1015 / CBS 113.46 / FGSC A1144 / LSHB Ac4 / NCTC 3858a / NRRL 328 / USDA 3528.7</strain>
    </source>
</reference>
<reference key="2">
    <citation type="journal article" date="2022" name="Front. Microbiol.">
        <title>Identification and genetic characterization of mitochondrial citrate transporters in Aspergillus niger.</title>
        <authorList>
            <person name="Cao W."/>
            <person name="Zhang L."/>
            <person name="Wu L."/>
            <person name="Zhang M."/>
            <person name="Liu J."/>
            <person name="Xie Z."/>
            <person name="Liu H."/>
        </authorList>
    </citation>
    <scope>FUNCTION</scope>
    <scope>DISRUPTION PHENOTYPE</scope>
</reference>